<feature type="chain" id="PRO_1000017105" description="tRNA pseudouridine synthase A">
    <location>
        <begin position="1"/>
        <end position="262"/>
    </location>
</feature>
<feature type="active site" description="Nucleophile" evidence="1">
    <location>
        <position position="51"/>
    </location>
</feature>
<feature type="binding site" evidence="1">
    <location>
        <position position="109"/>
    </location>
    <ligand>
        <name>substrate</name>
    </ligand>
</feature>
<accession>A5IBF5</accession>
<evidence type="ECO:0000255" key="1">
    <source>
        <dbReference type="HAMAP-Rule" id="MF_00171"/>
    </source>
</evidence>
<protein>
    <recommendedName>
        <fullName evidence="1">tRNA pseudouridine synthase A</fullName>
        <ecNumber evidence="1">5.4.99.12</ecNumber>
    </recommendedName>
    <alternativeName>
        <fullName evidence="1">tRNA pseudouridine(38-40) synthase</fullName>
    </alternativeName>
    <alternativeName>
        <fullName evidence="1">tRNA pseudouridylate synthase I</fullName>
    </alternativeName>
    <alternativeName>
        <fullName evidence="1">tRNA-uridine isomerase I</fullName>
    </alternativeName>
</protein>
<organism>
    <name type="scientific">Legionella pneumophila (strain Corby)</name>
    <dbReference type="NCBI Taxonomy" id="400673"/>
    <lineage>
        <taxon>Bacteria</taxon>
        <taxon>Pseudomonadati</taxon>
        <taxon>Pseudomonadota</taxon>
        <taxon>Gammaproteobacteria</taxon>
        <taxon>Legionellales</taxon>
        <taxon>Legionellaceae</taxon>
        <taxon>Legionella</taxon>
    </lineage>
</organism>
<sequence>MRIALVVEYDGSQYHGWQAQTGLHTIQQAVEFALSKVADSSISVVCAGRTDTGVHATNQVIHFDCEKDRSIRAWIHGANTFLPKDICVKWGKEMPENFHARYSAVSRRYRYVIYNGAIRPGLLRGNVTWQYRQLDHRLMQQGGQCLLGENDFTSFRSVECQSNTPMRNIHQLQVTRHGDLVVLDITANAFLHHMVRNIAGVLIAVGSGKHPVGWVKDVLNAKDRKLGAETAPSYGLYLVQVTYPKEFGLLQNNPGPLFLWEK</sequence>
<keyword id="KW-0413">Isomerase</keyword>
<keyword id="KW-0819">tRNA processing</keyword>
<reference key="1">
    <citation type="submission" date="2006-11" db="EMBL/GenBank/DDBJ databases">
        <title>Identification and characterization of a new conjugation/ type IVA secretion system (trb/tra) of L. pneumophila Corby localized on a mobile genomic island.</title>
        <authorList>
            <person name="Gloeckner G."/>
            <person name="Albert-Weissenberger C."/>
            <person name="Weinmann E."/>
            <person name="Jacobi S."/>
            <person name="Schunder E."/>
            <person name="Steinert M."/>
            <person name="Buchrieser C."/>
            <person name="Hacker J."/>
            <person name="Heuner K."/>
        </authorList>
    </citation>
    <scope>NUCLEOTIDE SEQUENCE [LARGE SCALE GENOMIC DNA]</scope>
    <source>
        <strain>Corby</strain>
    </source>
</reference>
<comment type="function">
    <text evidence="1">Formation of pseudouridine at positions 38, 39 and 40 in the anticodon stem and loop of transfer RNAs.</text>
</comment>
<comment type="catalytic activity">
    <reaction evidence="1">
        <text>uridine(38/39/40) in tRNA = pseudouridine(38/39/40) in tRNA</text>
        <dbReference type="Rhea" id="RHEA:22376"/>
        <dbReference type="Rhea" id="RHEA-COMP:10085"/>
        <dbReference type="Rhea" id="RHEA-COMP:10087"/>
        <dbReference type="ChEBI" id="CHEBI:65314"/>
        <dbReference type="ChEBI" id="CHEBI:65315"/>
        <dbReference type="EC" id="5.4.99.12"/>
    </reaction>
</comment>
<comment type="subunit">
    <text evidence="1">Homodimer.</text>
</comment>
<comment type="similarity">
    <text evidence="1">Belongs to the tRNA pseudouridine synthase TruA family.</text>
</comment>
<gene>
    <name evidence="1" type="primary">truA</name>
    <name type="ordered locus">LPC_0727</name>
</gene>
<proteinExistence type="inferred from homology"/>
<dbReference type="EC" id="5.4.99.12" evidence="1"/>
<dbReference type="EMBL" id="CP000675">
    <property type="protein sequence ID" value="ABQ54705.1"/>
    <property type="molecule type" value="Genomic_DNA"/>
</dbReference>
<dbReference type="RefSeq" id="WP_010947033.1">
    <property type="nucleotide sequence ID" value="NZ_JAPMSS010000002.1"/>
</dbReference>
<dbReference type="SMR" id="A5IBF5"/>
<dbReference type="GeneID" id="57035295"/>
<dbReference type="KEGG" id="lpc:LPC_0727"/>
<dbReference type="HOGENOM" id="CLU_014673_0_2_6"/>
<dbReference type="GO" id="GO:0003723">
    <property type="term" value="F:RNA binding"/>
    <property type="evidence" value="ECO:0007669"/>
    <property type="project" value="InterPro"/>
</dbReference>
<dbReference type="GO" id="GO:0160147">
    <property type="term" value="F:tRNA pseudouridine(38-40) synthase activity"/>
    <property type="evidence" value="ECO:0007669"/>
    <property type="project" value="UniProtKB-EC"/>
</dbReference>
<dbReference type="GO" id="GO:0031119">
    <property type="term" value="P:tRNA pseudouridine synthesis"/>
    <property type="evidence" value="ECO:0007669"/>
    <property type="project" value="UniProtKB-UniRule"/>
</dbReference>
<dbReference type="CDD" id="cd02570">
    <property type="entry name" value="PseudoU_synth_EcTruA"/>
    <property type="match status" value="1"/>
</dbReference>
<dbReference type="FunFam" id="3.30.70.580:FF:000001">
    <property type="entry name" value="tRNA pseudouridine synthase A"/>
    <property type="match status" value="1"/>
</dbReference>
<dbReference type="Gene3D" id="3.30.70.660">
    <property type="entry name" value="Pseudouridine synthase I, catalytic domain, C-terminal subdomain"/>
    <property type="match status" value="1"/>
</dbReference>
<dbReference type="Gene3D" id="3.30.70.580">
    <property type="entry name" value="Pseudouridine synthase I, catalytic domain, N-terminal subdomain"/>
    <property type="match status" value="1"/>
</dbReference>
<dbReference type="HAMAP" id="MF_00171">
    <property type="entry name" value="TruA"/>
    <property type="match status" value="1"/>
</dbReference>
<dbReference type="InterPro" id="IPR020103">
    <property type="entry name" value="PsdUridine_synth_cat_dom_sf"/>
</dbReference>
<dbReference type="InterPro" id="IPR001406">
    <property type="entry name" value="PsdUridine_synth_TruA"/>
</dbReference>
<dbReference type="InterPro" id="IPR020097">
    <property type="entry name" value="PsdUridine_synth_TruA_a/b_dom"/>
</dbReference>
<dbReference type="InterPro" id="IPR020095">
    <property type="entry name" value="PsdUridine_synth_TruA_C"/>
</dbReference>
<dbReference type="InterPro" id="IPR020094">
    <property type="entry name" value="TruA/RsuA/RluB/E/F_N"/>
</dbReference>
<dbReference type="NCBIfam" id="TIGR00071">
    <property type="entry name" value="hisT_truA"/>
    <property type="match status" value="1"/>
</dbReference>
<dbReference type="PANTHER" id="PTHR11142">
    <property type="entry name" value="PSEUDOURIDYLATE SYNTHASE"/>
    <property type="match status" value="1"/>
</dbReference>
<dbReference type="PANTHER" id="PTHR11142:SF0">
    <property type="entry name" value="TRNA PSEUDOURIDINE SYNTHASE-LIKE 1"/>
    <property type="match status" value="1"/>
</dbReference>
<dbReference type="Pfam" id="PF01416">
    <property type="entry name" value="PseudoU_synth_1"/>
    <property type="match status" value="2"/>
</dbReference>
<dbReference type="PIRSF" id="PIRSF001430">
    <property type="entry name" value="tRNA_psdUrid_synth"/>
    <property type="match status" value="1"/>
</dbReference>
<dbReference type="SUPFAM" id="SSF55120">
    <property type="entry name" value="Pseudouridine synthase"/>
    <property type="match status" value="1"/>
</dbReference>
<name>TRUA_LEGPC</name>